<comment type="function">
    <text evidence="2">Potent pro-inflammatory cytokine. Initially discovered as the major endogenous pyrogen, induces prostaglandin synthesis, neutrophil influx and activation, T-cell activation and cytokine production, B-cell activation and antibody production, and fibroblast proliferation and collagen production. Promotes Th17 differentiation of T-cells. Synergizes with IL12/interleukin-12 to induce IFNG synthesis from T-helper 1 (Th1) cells. Plays a role in angiogenesis by inducing VEGF production synergistically with TNF and IL6. Involved in transduction of inflammation downstream of pyroptosis: its mature form is specifically released in the extracellular milieu by passing through the gasdermin-D (GSDMD) pore.</text>
</comment>
<comment type="subunit">
    <text evidence="2">Monomer. In its precursor form, weakly interacts with full-length MEFV; the mature cytokine does not interact at all. Interacts with integrins ITGAV:ITGBV and ITGA5:ITGB1; integrin-binding is required for IL1B signaling. Interacts with cargo receptor TMED10; the interaction is direct and is required for the secretion of IL1B mature form. Interacts with HSP90AB1; the interaction facilitates cargo translocation into the ERGIC. Interacts with HSP90B1; the interaction facilitates cargo translocation into the ERGIC.</text>
</comment>
<comment type="subcellular location">
    <subcellularLocation>
        <location evidence="2">Cytoplasm</location>
        <location evidence="2">Cytosol</location>
    </subcellularLocation>
    <subcellularLocation>
        <location evidence="2">Secreted</location>
    </subcellularLocation>
    <subcellularLocation>
        <location evidence="2">Lysosome</location>
    </subcellularLocation>
    <subcellularLocation>
        <location evidence="3">Secreted</location>
        <location evidence="3">Extracellular exosome</location>
    </subcellularLocation>
    <text evidence="2">The precursor is cytosolic. In response to inflammasome-activating signals, such as ATP for NLRP3 inflammasome or bacterial flagellin for NLRC4 inflammasome, cleaved and secreted. Mature form is secreted and released in the extracellular milieu by passing through the gasdermin-D (GSDMD) pore. In contrast, the precursor form is not released, due to the presence of an acidic region that is proteolytically removed by CASP1 during maturation. The secretion is dependent on protein unfolding and facilitated by the cargo receptor TMED10.</text>
</comment>
<comment type="miscellaneous">
    <text evidence="1">IL1B production occurs in 2 steps, each being controlled by different stimuli. First, inflammatory signals, such as LPS, stimulate the synthesis and promote the accumulation of cytosolic stores of pro-IL1B (priming). Then additional signals are required for inflammasome assembly, leading to CASP1 activation, pro-IL1B processing and eventually secretion of the active cytokine. IL1B processing and secretion are temporarily associated.</text>
</comment>
<comment type="similarity">
    <text evidence="4">Belongs to the IL-1 family.</text>
</comment>
<feature type="propeptide" id="PRO_0000253760" evidence="1">
    <location>
        <begin position="1"/>
        <end position="118"/>
    </location>
</feature>
<feature type="chain" id="PRO_0000253761" description="Interleukin-1 beta">
    <location>
        <begin position="119"/>
        <end position="270"/>
    </location>
</feature>
<feature type="site" description="Important for interaction with integrin" evidence="2">
    <location>
        <position position="173"/>
    </location>
</feature>
<feature type="site" description="Important for interaction with integrin" evidence="2">
    <location>
        <position position="181"/>
    </location>
</feature>
<feature type="site" description="Important for interaction with integrin" evidence="2">
    <location>
        <position position="183"/>
    </location>
</feature>
<feature type="site" description="Important for interaction with integrin" evidence="2">
    <location>
        <position position="192"/>
    </location>
</feature>
<dbReference type="EMBL" id="AY578791">
    <property type="protein sequence ID" value="AAS91558.1"/>
    <property type="molecule type" value="mRNA"/>
</dbReference>
<dbReference type="SMR" id="Q6PUD2"/>
<dbReference type="GO" id="GO:0005829">
    <property type="term" value="C:cytosol"/>
    <property type="evidence" value="ECO:0007669"/>
    <property type="project" value="UniProtKB-SubCell"/>
</dbReference>
<dbReference type="GO" id="GO:0005615">
    <property type="term" value="C:extracellular space"/>
    <property type="evidence" value="ECO:0007669"/>
    <property type="project" value="UniProtKB-KW"/>
</dbReference>
<dbReference type="GO" id="GO:0005764">
    <property type="term" value="C:lysosome"/>
    <property type="evidence" value="ECO:0007669"/>
    <property type="project" value="UniProtKB-SubCell"/>
</dbReference>
<dbReference type="GO" id="GO:0005125">
    <property type="term" value="F:cytokine activity"/>
    <property type="evidence" value="ECO:0007669"/>
    <property type="project" value="UniProtKB-KW"/>
</dbReference>
<dbReference type="GO" id="GO:0005178">
    <property type="term" value="F:integrin binding"/>
    <property type="evidence" value="ECO:0000250"/>
    <property type="project" value="UniProtKB"/>
</dbReference>
<dbReference type="GO" id="GO:0005149">
    <property type="term" value="F:interleukin-1 receptor binding"/>
    <property type="evidence" value="ECO:0007669"/>
    <property type="project" value="InterPro"/>
</dbReference>
<dbReference type="GO" id="GO:0071222">
    <property type="term" value="P:cellular response to lipopolysaccharide"/>
    <property type="evidence" value="ECO:0007669"/>
    <property type="project" value="TreeGrafter"/>
</dbReference>
<dbReference type="GO" id="GO:0019221">
    <property type="term" value="P:cytokine-mediated signaling pathway"/>
    <property type="evidence" value="ECO:0007669"/>
    <property type="project" value="TreeGrafter"/>
</dbReference>
<dbReference type="GO" id="GO:0001660">
    <property type="term" value="P:fever generation"/>
    <property type="evidence" value="ECO:0007669"/>
    <property type="project" value="UniProtKB-KW"/>
</dbReference>
<dbReference type="GO" id="GO:0006955">
    <property type="term" value="P:immune response"/>
    <property type="evidence" value="ECO:0007669"/>
    <property type="project" value="InterPro"/>
</dbReference>
<dbReference type="GO" id="GO:0051781">
    <property type="term" value="P:positive regulation of cell division"/>
    <property type="evidence" value="ECO:0007669"/>
    <property type="project" value="UniProtKB-KW"/>
</dbReference>
<dbReference type="GO" id="GO:0033092">
    <property type="term" value="P:positive regulation of immature T cell proliferation in thymus"/>
    <property type="evidence" value="ECO:0007669"/>
    <property type="project" value="TreeGrafter"/>
</dbReference>
<dbReference type="GO" id="GO:2000556">
    <property type="term" value="P:positive regulation of T-helper 1 cell cytokine production"/>
    <property type="evidence" value="ECO:0000250"/>
    <property type="project" value="UniProtKB"/>
</dbReference>
<dbReference type="GO" id="GO:0032729">
    <property type="term" value="P:positive regulation of type II interferon production"/>
    <property type="evidence" value="ECO:0000250"/>
    <property type="project" value="UniProtKB"/>
</dbReference>
<dbReference type="GO" id="GO:0010573">
    <property type="term" value="P:vascular endothelial growth factor production"/>
    <property type="evidence" value="ECO:0000250"/>
    <property type="project" value="UniProtKB"/>
</dbReference>
<dbReference type="CDD" id="cd23296">
    <property type="entry name" value="beta-trefoil_IL1B"/>
    <property type="match status" value="1"/>
</dbReference>
<dbReference type="FunFam" id="2.80.10.50:FF:000027">
    <property type="entry name" value="Interleukin-1 beta"/>
    <property type="match status" value="1"/>
</dbReference>
<dbReference type="Gene3D" id="2.80.10.50">
    <property type="match status" value="1"/>
</dbReference>
<dbReference type="InterPro" id="IPR020877">
    <property type="entry name" value="IL-1_CS"/>
</dbReference>
<dbReference type="InterPro" id="IPR000975">
    <property type="entry name" value="IL-1_fam"/>
</dbReference>
<dbReference type="InterPro" id="IPR003502">
    <property type="entry name" value="IL-1_propep"/>
</dbReference>
<dbReference type="InterPro" id="IPR008996">
    <property type="entry name" value="IL1/FGF"/>
</dbReference>
<dbReference type="PANTHER" id="PTHR10078:SF30">
    <property type="entry name" value="INTERLEUKIN-1 BETA"/>
    <property type="match status" value="1"/>
</dbReference>
<dbReference type="PANTHER" id="PTHR10078">
    <property type="entry name" value="INTERLEUKIN-1 FAMILY MEMBER"/>
    <property type="match status" value="1"/>
</dbReference>
<dbReference type="Pfam" id="PF00340">
    <property type="entry name" value="IL1"/>
    <property type="match status" value="1"/>
</dbReference>
<dbReference type="Pfam" id="PF02394">
    <property type="entry name" value="IL1_propep"/>
    <property type="match status" value="1"/>
</dbReference>
<dbReference type="PRINTS" id="PR00262">
    <property type="entry name" value="IL1HBGF"/>
</dbReference>
<dbReference type="PRINTS" id="PR00264">
    <property type="entry name" value="INTERLEUKIN1"/>
</dbReference>
<dbReference type="PRINTS" id="PR01359">
    <property type="entry name" value="INTRLEUKIN1B"/>
</dbReference>
<dbReference type="PRINTS" id="PR01357">
    <property type="entry name" value="INTRLEUKN1AB"/>
</dbReference>
<dbReference type="SMART" id="SM00125">
    <property type="entry name" value="IL1"/>
    <property type="match status" value="1"/>
</dbReference>
<dbReference type="SUPFAM" id="SSF50353">
    <property type="entry name" value="Cytokine"/>
    <property type="match status" value="1"/>
</dbReference>
<dbReference type="PROSITE" id="PS00253">
    <property type="entry name" value="INTERLEUKIN_1"/>
    <property type="match status" value="1"/>
</dbReference>
<evidence type="ECO:0000250" key="1"/>
<evidence type="ECO:0000250" key="2">
    <source>
        <dbReference type="UniProtKB" id="P01584"/>
    </source>
</evidence>
<evidence type="ECO:0000250" key="3">
    <source>
        <dbReference type="UniProtKB" id="P10749"/>
    </source>
</evidence>
<evidence type="ECO:0000305" key="4"/>
<protein>
    <recommendedName>
        <fullName>Interleukin-1 beta</fullName>
        <shortName>IL-1 beta</shortName>
    </recommendedName>
</protein>
<gene>
    <name type="primary">IL1B</name>
</gene>
<keyword id="KW-0202">Cytokine</keyword>
<keyword id="KW-0963">Cytoplasm</keyword>
<keyword id="KW-0395">Inflammatory response</keyword>
<keyword id="KW-0458">Lysosome</keyword>
<keyword id="KW-0497">Mitogen</keyword>
<keyword id="KW-0666">Pyrogen</keyword>
<keyword id="KW-0964">Secreted</keyword>
<sequence>MATVPEPTSEMMSYYYSDNENDLFFEADGPRKMKCCFQDLNNSSLKDEGIQLHISHQLQNKSLRHFVSVVVALEKLKKISLPCSQPLQDDDLKNVFCCIFEEEPIVCEVYDDDAFVCDAPLQSLDCKFRDKNQKSLVLYNSYELRALHLNGSSVNQQAVFRMSFLQGDENSNKIPVALCIKEKNLYLSCVMKDGKPTLQLEMLDPRVYPKKKMEKRFVFNKTEVKKILEFESSQFPNWYISTSKAEAMPVFLGNTKGGQDITDFTMEFSS</sequence>
<organism>
    <name type="scientific">Phoca vitulina richardii</name>
    <name type="common">Pacific harbor seal</name>
    <dbReference type="NCBI Taxonomy" id="271025"/>
    <lineage>
        <taxon>Eukaryota</taxon>
        <taxon>Metazoa</taxon>
        <taxon>Chordata</taxon>
        <taxon>Craniata</taxon>
        <taxon>Vertebrata</taxon>
        <taxon>Euteleostomi</taxon>
        <taxon>Mammalia</taxon>
        <taxon>Eutheria</taxon>
        <taxon>Laurasiatheria</taxon>
        <taxon>Carnivora</taxon>
        <taxon>Caniformia</taxon>
        <taxon>Pinnipedia</taxon>
        <taxon>Phocidae</taxon>
        <taxon>Phocinae</taxon>
        <taxon>Phoca</taxon>
    </lineage>
</organism>
<name>IL1B_PHOVR</name>
<proteinExistence type="evidence at transcript level"/>
<accession>Q6PUD2</accession>
<reference key="1">
    <citation type="submission" date="2004-03" db="EMBL/GenBank/DDBJ databases">
        <title>Cloning and sequencing of interleukin-1 beta (IL-1b) from cDNA libraries of Alaskan pinniped species: Steller sea lion (Eumetopias jubatus) harbor seal (Phoca vitulina richardsi) and ringed seal (Phoca hispida).</title>
        <authorList>
            <person name="Bozza M."/>
            <person name="Atkinson S."/>
        </authorList>
    </citation>
    <scope>NUCLEOTIDE SEQUENCE [MRNA]</scope>
</reference>